<comment type="function">
    <text evidence="1">Catalyzes quinol oxidation with the concomitant reduction of oxygen to water.</text>
</comment>
<comment type="catalytic activity">
    <reaction>
        <text>2 a quinol + O2 = 2 a quinone + 2 H2O</text>
        <dbReference type="Rhea" id="RHEA:55376"/>
        <dbReference type="ChEBI" id="CHEBI:15377"/>
        <dbReference type="ChEBI" id="CHEBI:15379"/>
        <dbReference type="ChEBI" id="CHEBI:24646"/>
        <dbReference type="ChEBI" id="CHEBI:132124"/>
    </reaction>
</comment>
<comment type="subcellular location">
    <subcellularLocation>
        <location evidence="1">Cell membrane</location>
        <topology evidence="1">Multi-pass membrane protein</topology>
    </subcellularLocation>
</comment>
<comment type="similarity">
    <text evidence="3">Belongs to the cytochrome c oxidase bacterial subunit 4 family.</text>
</comment>
<feature type="chain" id="PRO_0000275860" description="Probable quinol oxidase subunit 4">
    <location>
        <begin position="1"/>
        <end position="96"/>
    </location>
</feature>
<feature type="transmembrane region" description="Helical" evidence="2">
    <location>
        <begin position="8"/>
        <end position="28"/>
    </location>
</feature>
<feature type="transmembrane region" description="Helical" evidence="2">
    <location>
        <begin position="36"/>
        <end position="56"/>
    </location>
</feature>
<feature type="transmembrane region" description="Helical" evidence="2">
    <location>
        <begin position="68"/>
        <end position="88"/>
    </location>
</feature>
<gene>
    <name type="primary">qoxD</name>
    <name type="ordered locus">SAS0993</name>
</gene>
<organism>
    <name type="scientific">Staphylococcus aureus (strain MSSA476)</name>
    <dbReference type="NCBI Taxonomy" id="282459"/>
    <lineage>
        <taxon>Bacteria</taxon>
        <taxon>Bacillati</taxon>
        <taxon>Bacillota</taxon>
        <taxon>Bacilli</taxon>
        <taxon>Bacillales</taxon>
        <taxon>Staphylococcaceae</taxon>
        <taxon>Staphylococcus</taxon>
    </lineage>
</organism>
<dbReference type="EC" id="1.10.3.-"/>
<dbReference type="EMBL" id="BX571857">
    <property type="protein sequence ID" value="CAG42768.1"/>
    <property type="molecule type" value="Genomic_DNA"/>
</dbReference>
<dbReference type="SMR" id="Q6GAF5"/>
<dbReference type="KEGG" id="sas:SAS0993"/>
<dbReference type="HOGENOM" id="CLU_140945_2_0_9"/>
<dbReference type="GO" id="GO:0009319">
    <property type="term" value="C:cytochrome o ubiquinol oxidase complex"/>
    <property type="evidence" value="ECO:0007669"/>
    <property type="project" value="TreeGrafter"/>
</dbReference>
<dbReference type="GO" id="GO:0005886">
    <property type="term" value="C:plasma membrane"/>
    <property type="evidence" value="ECO:0007669"/>
    <property type="project" value="UniProtKB-SubCell"/>
</dbReference>
<dbReference type="GO" id="GO:0009486">
    <property type="term" value="F:cytochrome bo3 ubiquinol oxidase activity"/>
    <property type="evidence" value="ECO:0007669"/>
    <property type="project" value="TreeGrafter"/>
</dbReference>
<dbReference type="GO" id="GO:0016682">
    <property type="term" value="F:oxidoreductase activity, acting on diphenols and related substances as donors, oxygen as acceptor"/>
    <property type="evidence" value="ECO:0007669"/>
    <property type="project" value="InterPro"/>
</dbReference>
<dbReference type="GO" id="GO:0015078">
    <property type="term" value="F:proton transmembrane transporter activity"/>
    <property type="evidence" value="ECO:0007669"/>
    <property type="project" value="TreeGrafter"/>
</dbReference>
<dbReference type="GO" id="GO:0019646">
    <property type="term" value="P:aerobic electron transport chain"/>
    <property type="evidence" value="ECO:0007669"/>
    <property type="project" value="TreeGrafter"/>
</dbReference>
<dbReference type="GO" id="GO:0042773">
    <property type="term" value="P:ATP synthesis coupled electron transport"/>
    <property type="evidence" value="ECO:0007669"/>
    <property type="project" value="InterPro"/>
</dbReference>
<dbReference type="GO" id="GO:0015990">
    <property type="term" value="P:electron transport coupled proton transport"/>
    <property type="evidence" value="ECO:0007669"/>
    <property type="project" value="TreeGrafter"/>
</dbReference>
<dbReference type="InterPro" id="IPR005171">
    <property type="entry name" value="Cyt_c_oxidase_su4_prok"/>
</dbReference>
<dbReference type="InterPro" id="IPR050968">
    <property type="entry name" value="Cytochrome_c_oxidase_bac_sub4"/>
</dbReference>
<dbReference type="InterPro" id="IPR014250">
    <property type="entry name" value="QoxD"/>
</dbReference>
<dbReference type="NCBIfam" id="TIGR02901">
    <property type="entry name" value="QoxD"/>
    <property type="match status" value="1"/>
</dbReference>
<dbReference type="PANTHER" id="PTHR36835">
    <property type="entry name" value="CYTOCHROME BO(3) UBIQUINOL OXIDASE SUBUNIT 4"/>
    <property type="match status" value="1"/>
</dbReference>
<dbReference type="PANTHER" id="PTHR36835:SF1">
    <property type="entry name" value="CYTOCHROME BO(3) UBIQUINOL OXIDASE SUBUNIT 4"/>
    <property type="match status" value="1"/>
</dbReference>
<dbReference type="Pfam" id="PF03626">
    <property type="entry name" value="COX4_pro"/>
    <property type="match status" value="1"/>
</dbReference>
<keyword id="KW-1003">Cell membrane</keyword>
<keyword id="KW-0472">Membrane</keyword>
<keyword id="KW-0560">Oxidoreductase</keyword>
<keyword id="KW-0812">Transmembrane</keyword>
<keyword id="KW-1133">Transmembrane helix</keyword>
<protein>
    <recommendedName>
        <fullName>Probable quinol oxidase subunit 4</fullName>
        <ecNumber>1.10.3.-</ecNumber>
    </recommendedName>
    <alternativeName>
        <fullName>Quinol oxidase polypeptide IV</fullName>
    </alternativeName>
</protein>
<reference key="1">
    <citation type="journal article" date="2004" name="Proc. Natl. Acad. Sci. U.S.A.">
        <title>Complete genomes of two clinical Staphylococcus aureus strains: evidence for the rapid evolution of virulence and drug resistance.</title>
        <authorList>
            <person name="Holden M.T.G."/>
            <person name="Feil E.J."/>
            <person name="Lindsay J.A."/>
            <person name="Peacock S.J."/>
            <person name="Day N.P.J."/>
            <person name="Enright M.C."/>
            <person name="Foster T.J."/>
            <person name="Moore C.E."/>
            <person name="Hurst L."/>
            <person name="Atkin R."/>
            <person name="Barron A."/>
            <person name="Bason N."/>
            <person name="Bentley S.D."/>
            <person name="Chillingworth C."/>
            <person name="Chillingworth T."/>
            <person name="Churcher C."/>
            <person name="Clark L."/>
            <person name="Corton C."/>
            <person name="Cronin A."/>
            <person name="Doggett J."/>
            <person name="Dowd L."/>
            <person name="Feltwell T."/>
            <person name="Hance Z."/>
            <person name="Harris B."/>
            <person name="Hauser H."/>
            <person name="Holroyd S."/>
            <person name="Jagels K."/>
            <person name="James K.D."/>
            <person name="Lennard N."/>
            <person name="Line A."/>
            <person name="Mayes R."/>
            <person name="Moule S."/>
            <person name="Mungall K."/>
            <person name="Ormond D."/>
            <person name="Quail M.A."/>
            <person name="Rabbinowitsch E."/>
            <person name="Rutherford K.M."/>
            <person name="Sanders M."/>
            <person name="Sharp S."/>
            <person name="Simmonds M."/>
            <person name="Stevens K."/>
            <person name="Whitehead S."/>
            <person name="Barrell B.G."/>
            <person name="Spratt B.G."/>
            <person name="Parkhill J."/>
        </authorList>
    </citation>
    <scope>NUCLEOTIDE SEQUENCE [LARGE SCALE GENOMIC DNA]</scope>
    <source>
        <strain>MSSA476</strain>
    </source>
</reference>
<name>QOX4_STAAS</name>
<accession>Q6GAF5</accession>
<sequence length="96" mass="10687">MSTIMKHTVGFIASIVLTLLAVYVTLYTSLTFHAKLTIIFGFAFVQAGLQLLMFMHLTEGKDGRLQTFKVIFALVITLCFVVGTYWVMQGGHSSHL</sequence>
<proteinExistence type="inferred from homology"/>
<evidence type="ECO:0000250" key="1"/>
<evidence type="ECO:0000255" key="2"/>
<evidence type="ECO:0000305" key="3"/>